<sequence length="331" mass="36158">MIDTSIPLVDLHRHLDGNVRVETIWDLGHQHNIALPADTLEGLAPFVQIQGKESSLVAFLKKLDWMVAVLADLDAVKRVAYENVADAAISGLDYAELRFSPYYMAMNHKLPIEGVVEAVIDGVKAGLKDYEVKINLIGIMSRSFGQDACMQELEALLAHKQHLVAMDLAGDELGFPGALFNDHFKKVRDAGLAITAHAGEAAGAESMWQAIQELGATRIGHGVNAIHDPKLMEYLAANRIGIESCPTSNLHTSTVTSYQEHPLRTFMEAGVLIGLNTDDPGVSAIDIKHEYRTVKQEMGFSDAELAQLQRNGVEMAFISDSERKALYAAKA</sequence>
<comment type="function">
    <text evidence="1">Catalyzes the hydrolytic deamination of adenosine and 2-deoxyadenosine.</text>
</comment>
<comment type="catalytic activity">
    <reaction evidence="1">
        <text>adenosine + H2O + H(+) = inosine + NH4(+)</text>
        <dbReference type="Rhea" id="RHEA:24408"/>
        <dbReference type="ChEBI" id="CHEBI:15377"/>
        <dbReference type="ChEBI" id="CHEBI:15378"/>
        <dbReference type="ChEBI" id="CHEBI:16335"/>
        <dbReference type="ChEBI" id="CHEBI:17596"/>
        <dbReference type="ChEBI" id="CHEBI:28938"/>
        <dbReference type="EC" id="3.5.4.4"/>
    </reaction>
    <physiologicalReaction direction="left-to-right" evidence="1">
        <dbReference type="Rhea" id="RHEA:24409"/>
    </physiologicalReaction>
</comment>
<comment type="catalytic activity">
    <reaction evidence="1">
        <text>2'-deoxyadenosine + H2O + H(+) = 2'-deoxyinosine + NH4(+)</text>
        <dbReference type="Rhea" id="RHEA:28190"/>
        <dbReference type="ChEBI" id="CHEBI:15377"/>
        <dbReference type="ChEBI" id="CHEBI:15378"/>
        <dbReference type="ChEBI" id="CHEBI:17256"/>
        <dbReference type="ChEBI" id="CHEBI:28938"/>
        <dbReference type="ChEBI" id="CHEBI:28997"/>
        <dbReference type="EC" id="3.5.4.4"/>
    </reaction>
    <physiologicalReaction direction="left-to-right" evidence="1">
        <dbReference type="Rhea" id="RHEA:28191"/>
    </physiologicalReaction>
</comment>
<comment type="cofactor">
    <cofactor evidence="1">
        <name>Zn(2+)</name>
        <dbReference type="ChEBI" id="CHEBI:29105"/>
    </cofactor>
    <text evidence="1">Binds 1 zinc ion per subunit.</text>
</comment>
<comment type="similarity">
    <text evidence="1">Belongs to the metallo-dependent hydrolases superfamily. Adenosine and AMP deaminases family. Adenosine deaminase subfamily.</text>
</comment>
<reference key="1">
    <citation type="submission" date="2007-03" db="EMBL/GenBank/DDBJ databases">
        <title>Complete sequence of Shewanella loihica PV-4.</title>
        <authorList>
            <consortium name="US DOE Joint Genome Institute"/>
            <person name="Copeland A."/>
            <person name="Lucas S."/>
            <person name="Lapidus A."/>
            <person name="Barry K."/>
            <person name="Detter J.C."/>
            <person name="Glavina del Rio T."/>
            <person name="Hammon N."/>
            <person name="Israni S."/>
            <person name="Dalin E."/>
            <person name="Tice H."/>
            <person name="Pitluck S."/>
            <person name="Chain P."/>
            <person name="Malfatti S."/>
            <person name="Shin M."/>
            <person name="Vergez L."/>
            <person name="Schmutz J."/>
            <person name="Larimer F."/>
            <person name="Land M."/>
            <person name="Hauser L."/>
            <person name="Kyrpides N."/>
            <person name="Mikhailova N."/>
            <person name="Romine M.F."/>
            <person name="Serres G."/>
            <person name="Fredrickson J."/>
            <person name="Tiedje J."/>
            <person name="Richardson P."/>
        </authorList>
    </citation>
    <scope>NUCLEOTIDE SEQUENCE [LARGE SCALE GENOMIC DNA]</scope>
    <source>
        <strain>ATCC BAA-1088 / PV-4</strain>
    </source>
</reference>
<protein>
    <recommendedName>
        <fullName evidence="1">Adenosine deaminase</fullName>
        <ecNumber evidence="1">3.5.4.4</ecNumber>
    </recommendedName>
    <alternativeName>
        <fullName evidence="1">Adenosine aminohydrolase</fullName>
    </alternativeName>
</protein>
<feature type="chain" id="PRO_1000017698" description="Adenosine deaminase">
    <location>
        <begin position="1"/>
        <end position="331"/>
    </location>
</feature>
<feature type="active site" description="Proton donor" evidence="1">
    <location>
        <position position="200"/>
    </location>
</feature>
<feature type="binding site" evidence="1">
    <location>
        <position position="12"/>
    </location>
    <ligand>
        <name>Zn(2+)</name>
        <dbReference type="ChEBI" id="CHEBI:29105"/>
        <note>catalytic</note>
    </ligand>
</feature>
<feature type="binding site" evidence="1">
    <location>
        <position position="14"/>
    </location>
    <ligand>
        <name>substrate</name>
    </ligand>
</feature>
<feature type="binding site" evidence="1">
    <location>
        <position position="14"/>
    </location>
    <ligand>
        <name>Zn(2+)</name>
        <dbReference type="ChEBI" id="CHEBI:29105"/>
        <note>catalytic</note>
    </ligand>
</feature>
<feature type="binding site" evidence="1">
    <location>
        <position position="16"/>
    </location>
    <ligand>
        <name>substrate</name>
    </ligand>
</feature>
<feature type="binding site" evidence="1">
    <location>
        <position position="170"/>
    </location>
    <ligand>
        <name>substrate</name>
    </ligand>
</feature>
<feature type="binding site" evidence="1">
    <location>
        <position position="197"/>
    </location>
    <ligand>
        <name>Zn(2+)</name>
        <dbReference type="ChEBI" id="CHEBI:29105"/>
        <note>catalytic</note>
    </ligand>
</feature>
<feature type="binding site" evidence="1">
    <location>
        <position position="278"/>
    </location>
    <ligand>
        <name>Zn(2+)</name>
        <dbReference type="ChEBI" id="CHEBI:29105"/>
        <note>catalytic</note>
    </ligand>
</feature>
<feature type="binding site" evidence="1">
    <location>
        <position position="279"/>
    </location>
    <ligand>
        <name>substrate</name>
    </ligand>
</feature>
<feature type="site" description="Important for catalytic activity" evidence="1">
    <location>
        <position position="221"/>
    </location>
</feature>
<keyword id="KW-0378">Hydrolase</keyword>
<keyword id="KW-0479">Metal-binding</keyword>
<keyword id="KW-0546">Nucleotide metabolism</keyword>
<keyword id="KW-1185">Reference proteome</keyword>
<keyword id="KW-0862">Zinc</keyword>
<accession>A3QJD9</accession>
<organism>
    <name type="scientific">Shewanella loihica (strain ATCC BAA-1088 / PV-4)</name>
    <dbReference type="NCBI Taxonomy" id="323850"/>
    <lineage>
        <taxon>Bacteria</taxon>
        <taxon>Pseudomonadati</taxon>
        <taxon>Pseudomonadota</taxon>
        <taxon>Gammaproteobacteria</taxon>
        <taxon>Alteromonadales</taxon>
        <taxon>Shewanellaceae</taxon>
        <taxon>Shewanella</taxon>
    </lineage>
</organism>
<evidence type="ECO:0000255" key="1">
    <source>
        <dbReference type="HAMAP-Rule" id="MF_00540"/>
    </source>
</evidence>
<proteinExistence type="inferred from homology"/>
<dbReference type="EC" id="3.5.4.4" evidence="1"/>
<dbReference type="EMBL" id="CP000606">
    <property type="protein sequence ID" value="ABO25587.1"/>
    <property type="molecule type" value="Genomic_DNA"/>
</dbReference>
<dbReference type="RefSeq" id="WP_011867515.1">
    <property type="nucleotide sequence ID" value="NC_009092.1"/>
</dbReference>
<dbReference type="SMR" id="A3QJD9"/>
<dbReference type="STRING" id="323850.Shew_3721"/>
<dbReference type="KEGG" id="slo:Shew_3721"/>
<dbReference type="eggNOG" id="COG1816">
    <property type="taxonomic scope" value="Bacteria"/>
</dbReference>
<dbReference type="HOGENOM" id="CLU_039228_0_2_6"/>
<dbReference type="OrthoDB" id="105475at2"/>
<dbReference type="Proteomes" id="UP000001558">
    <property type="component" value="Chromosome"/>
</dbReference>
<dbReference type="GO" id="GO:0005829">
    <property type="term" value="C:cytosol"/>
    <property type="evidence" value="ECO:0007669"/>
    <property type="project" value="TreeGrafter"/>
</dbReference>
<dbReference type="GO" id="GO:0046936">
    <property type="term" value="F:2'-deoxyadenosine deaminase activity"/>
    <property type="evidence" value="ECO:0007669"/>
    <property type="project" value="RHEA"/>
</dbReference>
<dbReference type="GO" id="GO:0004000">
    <property type="term" value="F:adenosine deaminase activity"/>
    <property type="evidence" value="ECO:0007669"/>
    <property type="project" value="UniProtKB-UniRule"/>
</dbReference>
<dbReference type="GO" id="GO:0008270">
    <property type="term" value="F:zinc ion binding"/>
    <property type="evidence" value="ECO:0007669"/>
    <property type="project" value="UniProtKB-UniRule"/>
</dbReference>
<dbReference type="GO" id="GO:0006154">
    <property type="term" value="P:adenosine catabolic process"/>
    <property type="evidence" value="ECO:0007669"/>
    <property type="project" value="TreeGrafter"/>
</dbReference>
<dbReference type="GO" id="GO:0043103">
    <property type="term" value="P:hypoxanthine salvage"/>
    <property type="evidence" value="ECO:0007669"/>
    <property type="project" value="TreeGrafter"/>
</dbReference>
<dbReference type="GO" id="GO:0046103">
    <property type="term" value="P:inosine biosynthetic process"/>
    <property type="evidence" value="ECO:0007669"/>
    <property type="project" value="TreeGrafter"/>
</dbReference>
<dbReference type="GO" id="GO:0009117">
    <property type="term" value="P:nucleotide metabolic process"/>
    <property type="evidence" value="ECO:0007669"/>
    <property type="project" value="UniProtKB-KW"/>
</dbReference>
<dbReference type="GO" id="GO:0009168">
    <property type="term" value="P:purine ribonucleoside monophosphate biosynthetic process"/>
    <property type="evidence" value="ECO:0007669"/>
    <property type="project" value="UniProtKB-UniRule"/>
</dbReference>
<dbReference type="FunFam" id="3.20.20.140:FF:000009">
    <property type="entry name" value="Adenosine deaminase"/>
    <property type="match status" value="1"/>
</dbReference>
<dbReference type="Gene3D" id="3.20.20.140">
    <property type="entry name" value="Metal-dependent hydrolases"/>
    <property type="match status" value="1"/>
</dbReference>
<dbReference type="HAMAP" id="MF_00540">
    <property type="entry name" value="A_deaminase"/>
    <property type="match status" value="1"/>
</dbReference>
<dbReference type="InterPro" id="IPR028893">
    <property type="entry name" value="A_deaminase"/>
</dbReference>
<dbReference type="InterPro" id="IPR001365">
    <property type="entry name" value="A_deaminase_dom"/>
</dbReference>
<dbReference type="InterPro" id="IPR006330">
    <property type="entry name" value="Ado/ade_deaminase"/>
</dbReference>
<dbReference type="InterPro" id="IPR032466">
    <property type="entry name" value="Metal_Hydrolase"/>
</dbReference>
<dbReference type="NCBIfam" id="TIGR01430">
    <property type="entry name" value="aden_deam"/>
    <property type="match status" value="1"/>
</dbReference>
<dbReference type="NCBIfam" id="NF006846">
    <property type="entry name" value="PRK09358.1-1"/>
    <property type="match status" value="1"/>
</dbReference>
<dbReference type="PANTHER" id="PTHR11409">
    <property type="entry name" value="ADENOSINE DEAMINASE"/>
    <property type="match status" value="1"/>
</dbReference>
<dbReference type="PANTHER" id="PTHR11409:SF43">
    <property type="entry name" value="ADENOSINE DEAMINASE"/>
    <property type="match status" value="1"/>
</dbReference>
<dbReference type="Pfam" id="PF00962">
    <property type="entry name" value="A_deaminase"/>
    <property type="match status" value="1"/>
</dbReference>
<dbReference type="SUPFAM" id="SSF51556">
    <property type="entry name" value="Metallo-dependent hydrolases"/>
    <property type="match status" value="1"/>
</dbReference>
<name>ADD_SHELP</name>
<gene>
    <name evidence="1" type="primary">add</name>
    <name type="ordered locus">Shew_3721</name>
</gene>